<dbReference type="EC" id="2.4.1.152" evidence="2 3"/>
<dbReference type="EMBL" id="AJ831840">
    <property type="protein sequence ID" value="CAH41983.1"/>
    <property type="molecule type" value="mRNA"/>
</dbReference>
<dbReference type="RefSeq" id="NP_001008985.2">
    <property type="nucleotide sequence ID" value="NM_001008985.2"/>
</dbReference>
<dbReference type="SMR" id="Q659K9"/>
<dbReference type="FunCoup" id="Q659K9">
    <property type="interactions" value="1150"/>
</dbReference>
<dbReference type="STRING" id="9598.ENSPTRP00000047698"/>
<dbReference type="CAZy" id="GT10">
    <property type="family name" value="Glycosyltransferase Family 10"/>
</dbReference>
<dbReference type="GlyCosmos" id="Q659K9">
    <property type="glycosylation" value="2 sites, No reported glycans"/>
</dbReference>
<dbReference type="PaxDb" id="9598-ENSPTRP00000047698"/>
<dbReference type="Ensembl" id="ENSPTRT00000055239.4">
    <property type="protein sequence ID" value="ENSPTRP00000047698.3"/>
    <property type="gene ID" value="ENSPTRG00000028425.4"/>
</dbReference>
<dbReference type="GeneID" id="449507"/>
<dbReference type="KEGG" id="ptr:449507"/>
<dbReference type="CTD" id="2526"/>
<dbReference type="VGNC" id="VGNC:3125">
    <property type="gene designation" value="FUT4"/>
</dbReference>
<dbReference type="eggNOG" id="KOG2619">
    <property type="taxonomic scope" value="Eukaryota"/>
</dbReference>
<dbReference type="GeneTree" id="ENSGT00940000162506"/>
<dbReference type="HOGENOM" id="CLU_032075_4_0_1"/>
<dbReference type="InParanoid" id="Q659K9"/>
<dbReference type="OMA" id="QLWVWMN"/>
<dbReference type="OrthoDB" id="8757at9604"/>
<dbReference type="TreeFam" id="TF316348"/>
<dbReference type="UniPathway" id="UPA00378"/>
<dbReference type="Proteomes" id="UP000002277">
    <property type="component" value="Chromosome 11"/>
</dbReference>
<dbReference type="Bgee" id="ENSPTRG00000028425">
    <property type="expression patterns" value="Expressed in lymph node and 17 other cell types or tissues"/>
</dbReference>
<dbReference type="GO" id="GO:0071944">
    <property type="term" value="C:cell periphery"/>
    <property type="evidence" value="ECO:0007669"/>
    <property type="project" value="Ensembl"/>
</dbReference>
<dbReference type="GO" id="GO:0009986">
    <property type="term" value="C:cell surface"/>
    <property type="evidence" value="ECO:0007669"/>
    <property type="project" value="Ensembl"/>
</dbReference>
<dbReference type="GO" id="GO:0032580">
    <property type="term" value="C:Golgi cisterna membrane"/>
    <property type="evidence" value="ECO:0007669"/>
    <property type="project" value="UniProtKB-SubCell"/>
</dbReference>
<dbReference type="GO" id="GO:0005802">
    <property type="term" value="C:trans-Golgi network"/>
    <property type="evidence" value="ECO:0000250"/>
    <property type="project" value="UniProtKB"/>
</dbReference>
<dbReference type="GO" id="GO:0017083">
    <property type="term" value="F:4-galactosyl-N-acetylglucosaminide 3-alpha-L-fucosyltransferase activity"/>
    <property type="evidence" value="ECO:0000250"/>
    <property type="project" value="UniProtKB"/>
</dbReference>
<dbReference type="GO" id="GO:0046920">
    <property type="term" value="F:alpha-(1-&gt;3)-fucosyltransferase activity"/>
    <property type="evidence" value="ECO:0000250"/>
    <property type="project" value="UniProtKB"/>
</dbReference>
<dbReference type="GO" id="GO:0036065">
    <property type="term" value="P:fucosylation"/>
    <property type="evidence" value="ECO:0000318"/>
    <property type="project" value="GO_Central"/>
</dbReference>
<dbReference type="GO" id="GO:0006688">
    <property type="term" value="P:glycosphingolipid biosynthetic process"/>
    <property type="evidence" value="ECO:0000250"/>
    <property type="project" value="UniProtKB"/>
</dbReference>
<dbReference type="GO" id="GO:0006954">
    <property type="term" value="P:inflammatory response"/>
    <property type="evidence" value="ECO:0007669"/>
    <property type="project" value="UniProtKB-KW"/>
</dbReference>
<dbReference type="GO" id="GO:0106402">
    <property type="term" value="P:Lewis x epitope biosynthetic process"/>
    <property type="evidence" value="ECO:0000250"/>
    <property type="project" value="UniProtKB"/>
</dbReference>
<dbReference type="GO" id="GO:0097022">
    <property type="term" value="P:lymphocyte migration into lymph node"/>
    <property type="evidence" value="ECO:0000250"/>
    <property type="project" value="UniProtKB"/>
</dbReference>
<dbReference type="GO" id="GO:0009311">
    <property type="term" value="P:oligosaccharide metabolic process"/>
    <property type="evidence" value="ECO:0000250"/>
    <property type="project" value="UniProtKB"/>
</dbReference>
<dbReference type="GO" id="GO:1903238">
    <property type="term" value="P:positive regulation of leukocyte tethering or rolling"/>
    <property type="evidence" value="ECO:0000250"/>
    <property type="project" value="UniProtKB"/>
</dbReference>
<dbReference type="GO" id="GO:1902624">
    <property type="term" value="P:positive regulation of neutrophil migration"/>
    <property type="evidence" value="ECO:0000250"/>
    <property type="project" value="UniProtKB"/>
</dbReference>
<dbReference type="GO" id="GO:0006487">
    <property type="term" value="P:protein N-linked glycosylation"/>
    <property type="evidence" value="ECO:0000250"/>
    <property type="project" value="UniProtKB"/>
</dbReference>
<dbReference type="GO" id="GO:0006493">
    <property type="term" value="P:protein O-linked glycosylation"/>
    <property type="evidence" value="ECO:0000250"/>
    <property type="project" value="UniProtKB"/>
</dbReference>
<dbReference type="GO" id="GO:1903037">
    <property type="term" value="P:regulation of leukocyte cell-cell adhesion"/>
    <property type="evidence" value="ECO:0000250"/>
    <property type="project" value="UniProtKB"/>
</dbReference>
<dbReference type="FunFam" id="3.40.50.11660:FF:000001">
    <property type="entry name" value="alpha-(1,3)-fucosyltransferase 9"/>
    <property type="match status" value="1"/>
</dbReference>
<dbReference type="Gene3D" id="3.40.50.11660">
    <property type="entry name" value="Glycosyl transferase family 10, C-terminal domain"/>
    <property type="match status" value="1"/>
</dbReference>
<dbReference type="InterPro" id="IPR055270">
    <property type="entry name" value="Glyco_tran_10_C"/>
</dbReference>
<dbReference type="InterPro" id="IPR031481">
    <property type="entry name" value="Glyco_tran_10_N"/>
</dbReference>
<dbReference type="InterPro" id="IPR001503">
    <property type="entry name" value="Glyco_trans_10"/>
</dbReference>
<dbReference type="InterPro" id="IPR038577">
    <property type="entry name" value="GT10-like_C_sf"/>
</dbReference>
<dbReference type="PANTHER" id="PTHR11929">
    <property type="entry name" value="ALPHA- 1,3 -FUCOSYLTRANSFERASE"/>
    <property type="match status" value="1"/>
</dbReference>
<dbReference type="PANTHER" id="PTHR11929:SF132">
    <property type="entry name" value="ALPHA-(1,3)-FUCOSYLTRANSFERASE 4"/>
    <property type="match status" value="1"/>
</dbReference>
<dbReference type="Pfam" id="PF17039">
    <property type="entry name" value="Glyco_tran_10_N"/>
    <property type="match status" value="1"/>
</dbReference>
<dbReference type="Pfam" id="PF00852">
    <property type="entry name" value="Glyco_transf_10"/>
    <property type="match status" value="1"/>
</dbReference>
<dbReference type="SUPFAM" id="SSF53756">
    <property type="entry name" value="UDP-Glycosyltransferase/glycogen phosphorylase"/>
    <property type="match status" value="1"/>
</dbReference>
<feature type="chain" id="PRO_0000221102" description="Alpha-(1,3)-fucosyltransferase 4">
    <location>
        <begin position="1"/>
        <end position="530"/>
    </location>
</feature>
<feature type="topological domain" description="Cytoplasmic" evidence="4">
    <location>
        <begin position="1"/>
        <end position="147"/>
    </location>
</feature>
<feature type="transmembrane region" description="Helical; Signal-anchor for type II membrane protein" evidence="4">
    <location>
        <begin position="148"/>
        <end position="172"/>
    </location>
</feature>
<feature type="topological domain" description="Lumenal" evidence="4">
    <location>
        <begin position="173"/>
        <end position="530"/>
    </location>
</feature>
<feature type="region of interest" description="Disordered" evidence="5">
    <location>
        <begin position="1"/>
        <end position="48"/>
    </location>
</feature>
<feature type="region of interest" description="Disordered" evidence="5">
    <location>
        <begin position="66"/>
        <end position="113"/>
    </location>
</feature>
<feature type="compositionally biased region" description="Basic and acidic residues" evidence="5">
    <location>
        <begin position="88"/>
        <end position="106"/>
    </location>
</feature>
<feature type="glycosylation site" description="N-linked (GlcNAc...) asparagine" evidence="4">
    <location>
        <position position="216"/>
    </location>
</feature>
<feature type="glycosylation site" description="N-linked (GlcNAc...) asparagine" evidence="4">
    <location>
        <position position="315"/>
    </location>
</feature>
<organism>
    <name type="scientific">Pan troglodytes</name>
    <name type="common">Chimpanzee</name>
    <dbReference type="NCBI Taxonomy" id="9598"/>
    <lineage>
        <taxon>Eukaryota</taxon>
        <taxon>Metazoa</taxon>
        <taxon>Chordata</taxon>
        <taxon>Craniata</taxon>
        <taxon>Vertebrata</taxon>
        <taxon>Euteleostomi</taxon>
        <taxon>Mammalia</taxon>
        <taxon>Eutheria</taxon>
        <taxon>Euarchontoglires</taxon>
        <taxon>Primates</taxon>
        <taxon>Haplorrhini</taxon>
        <taxon>Catarrhini</taxon>
        <taxon>Hominidae</taxon>
        <taxon>Pan</taxon>
    </lineage>
</organism>
<comment type="function">
    <text evidence="2 3">Catalyzes alpha(1-&gt;3) linkage of fucosyl moiety transferred from GDP-beta-L-fucose to N-acetyl glucosamine (GlcNAc) within type 2 lactosamine (LacNAc, Gal-beta(1-&gt;4)GlcNAc) glycan attached to N- or O-linked glycoproteins. Robustly fucosylates nonsialylated distal LacNAc unit of the polylactosamine chain to form Lewis X antigen (CD15), a glycan determinant known to mediate important cellular functions in development and immunity. Fucosylates with lower efficiency sialylated LacNAc acceptors to form sialyl Lewis X and 6-sulfo sialyl Lewis X determinants that serve as recognition epitopes for C-type lectins. Together with FUT7 contributes to SELE, SELL and SELP selectin ligand biosynthesis and selectin-dependent lymphocyte homing, leukocyte migration and blood leukocyte homeostasis (By similarity). In a cell type specific manner, may also fucosylate the internal LacNAc unit of the polylactosamine chain to form VIM-2 antigen that serves as recognition epitope for SELE (By similarity).</text>
</comment>
<comment type="catalytic activity">
    <reaction evidence="3">
        <text>a beta-D-galactosyl-(1-&gt;4)-N-acetyl-beta-D-glucosaminyl derivative + GDP-beta-L-fucose = a beta-D-galactosyl-(1-&gt;4)-[alpha-L-fucosyl-(1-&gt;3)]-N-acetyl-beta-D-glucosaminyl derivative + GDP + H(+)</text>
        <dbReference type="Rhea" id="RHEA:14257"/>
        <dbReference type="ChEBI" id="CHEBI:15378"/>
        <dbReference type="ChEBI" id="CHEBI:57273"/>
        <dbReference type="ChEBI" id="CHEBI:58189"/>
        <dbReference type="ChEBI" id="CHEBI:133507"/>
        <dbReference type="ChEBI" id="CHEBI:137941"/>
        <dbReference type="EC" id="2.4.1.152"/>
    </reaction>
    <physiologicalReaction direction="left-to-right" evidence="3">
        <dbReference type="Rhea" id="RHEA:14258"/>
    </physiologicalReaction>
</comment>
<comment type="catalytic activity">
    <reaction evidence="3">
        <text>an N-acetyl-alpha-neuraminyl-(2-&gt;3)-beta-D-galactosyl-(1-&gt;4)-N-acetyl-beta-D-glucosaminyl derivative + GDP-beta-L-fucose = an alpha-Neu5Ac-(2-&gt;3)-beta-D-Gal-(1-&gt;4)-[alpha-L-Fuc-(1-&gt;3)]-beta-D-GlcNAc derivative + GDP + H(+)</text>
        <dbReference type="Rhea" id="RHEA:56076"/>
        <dbReference type="ChEBI" id="CHEBI:15378"/>
        <dbReference type="ChEBI" id="CHEBI:57273"/>
        <dbReference type="ChEBI" id="CHEBI:58189"/>
        <dbReference type="ChEBI" id="CHEBI:136545"/>
        <dbReference type="ChEBI" id="CHEBI:139509"/>
    </reaction>
    <physiologicalReaction direction="left-to-right" evidence="3">
        <dbReference type="Rhea" id="RHEA:56077"/>
    </physiologicalReaction>
</comment>
<comment type="catalytic activity">
    <reaction evidence="2">
        <text>an alpha-Neu5Ac-(2-&gt;3)-beta-D-Gal-(1-&gt;4)-beta-D-GlcNAc-(1-&gt;3)-beta-D-Gal-(1-&gt;4)-beta-D-GlcNAc derivative + GDP-beta-L-fucose = an alpha-Neu5Ac-(2-&gt;3)-beta-D-Gal-(1-&gt;4)-beta-D-GlcNAc-(1-&gt;3)-beta-D-Gal-(1-&gt;4)-[alpha-L-Fuc-(1-&gt;3)]-beta-D-GlcNAc derivative + GDP + H(+)</text>
        <dbReference type="Rhea" id="RHEA:68044"/>
        <dbReference type="ChEBI" id="CHEBI:15378"/>
        <dbReference type="ChEBI" id="CHEBI:57273"/>
        <dbReference type="ChEBI" id="CHEBI:58189"/>
        <dbReference type="ChEBI" id="CHEBI:145343"/>
        <dbReference type="ChEBI" id="CHEBI:176900"/>
    </reaction>
    <physiologicalReaction direction="left-to-right" evidence="2">
        <dbReference type="Rhea" id="RHEA:68045"/>
    </physiologicalReaction>
</comment>
<comment type="catalytic activity">
    <reaction evidence="3">
        <text>an alpha-Neu5Ac-(2-&gt;3)-beta-D-Gal-(1-&gt;4)-beta-D-GlcNAc6S derivative + GDP-beta-L-fucose = an alpha-Neu5Ac-(2-&gt;3)-beta-D-Gal-(1-&gt;4)-[alpha-L-Fuc-(1-&gt;3)]-beta-D-GlcNAc6S derivative + GDP + H(+)</text>
        <dbReference type="Rhea" id="RHEA:62004"/>
        <dbReference type="ChEBI" id="CHEBI:15378"/>
        <dbReference type="ChEBI" id="CHEBI:57273"/>
        <dbReference type="ChEBI" id="CHEBI:58189"/>
        <dbReference type="ChEBI" id="CHEBI:145344"/>
        <dbReference type="ChEBI" id="CHEBI:145345"/>
    </reaction>
    <physiologicalReaction direction="left-to-right" evidence="3">
        <dbReference type="Rhea" id="RHEA:62005"/>
    </physiologicalReaction>
</comment>
<comment type="pathway">
    <text evidence="3">Protein modification; protein glycosylation.</text>
</comment>
<comment type="subcellular location">
    <subcellularLocation>
        <location evidence="1">Golgi apparatus</location>
        <location evidence="1">Golgi stack membrane</location>
        <topology evidence="1">Single-pass type II membrane protein</topology>
    </subcellularLocation>
    <text evidence="1">Membrane-bound form in trans cisternae of Golgi.</text>
</comment>
<comment type="similarity">
    <text evidence="6">Belongs to the glycosyltransferase 10 family.</text>
</comment>
<gene>
    <name type="primary">FUT4</name>
</gene>
<sequence>MRRLWGAARKPSGAGWEKEWAEAPQEAPGAWSGRLGPGRSGRKGRAVPGWASWPAHLALAARPARHLGGAGQGPRPLDSGTAPFHSRASGERQRRLEPQLQHESRCRSSTPADAWRAEAALPVRAMGAPWGSPTAAAGGRRRWRRGRGLPWTVCVLAAAGLTCTALITYACWGQLPPLPWASPTPSRPVGVLLWWEPFAGRHSAPRPPPDCRLRFNISGCRLLTDRASYGEAQAVLFHHRDLVKGPPDWPPPWGVQAHTAEEVDLRVLDYEEAAAAAEALATSSPRPPGQRWVWMNFESPSHSPGLRSLASNLFNWTLSYRADSDVFVPYGYLYPRSHPGDPPSGLAPPLSRKQGLVAWVVSHWDERQARVRYYHQLSQHVTVDVFGRGGPGQPVPEIGLLHTVARYKFYLAFENSQHLDYITEKLWRNALLAGAVPVVLGPDRANYERFVPRGAFIHVDDFPSASSLASYLLFLDRNPAVYRRYFHWRRSYAVHITSFWDEPWCRVCQAVQRAGDRPKSIRNLASWFER</sequence>
<name>FUT4_PANTR</name>
<keyword id="KW-0325">Glycoprotein</keyword>
<keyword id="KW-0328">Glycosyltransferase</keyword>
<keyword id="KW-0333">Golgi apparatus</keyword>
<keyword id="KW-0395">Inflammatory response</keyword>
<keyword id="KW-0472">Membrane</keyword>
<keyword id="KW-1185">Reference proteome</keyword>
<keyword id="KW-0735">Signal-anchor</keyword>
<keyword id="KW-0808">Transferase</keyword>
<keyword id="KW-0812">Transmembrane</keyword>
<keyword id="KW-1133">Transmembrane helix</keyword>
<proteinExistence type="evidence at transcript level"/>
<protein>
    <recommendedName>
        <fullName>Alpha-(1,3)-fucosyltransferase 4</fullName>
    </recommendedName>
    <alternativeName>
        <fullName>4-galactosyl-N-acetylglucosaminide 3-alpha-L-fucosyltransferase</fullName>
        <ecNumber evidence="2 3">2.4.1.152</ecNumber>
    </alternativeName>
    <alternativeName>
        <fullName>Fucosyltransferase 4</fullName>
    </alternativeName>
    <alternativeName>
        <fullName>Fucosyltransferase IV</fullName>
        <shortName>Fuc-TIV</shortName>
        <shortName>FucT-IV</shortName>
    </alternativeName>
    <alternativeName>
        <fullName>Galactoside 3-L-fucosyltransferase</fullName>
    </alternativeName>
</protein>
<evidence type="ECO:0000250" key="1"/>
<evidence type="ECO:0000250" key="2">
    <source>
        <dbReference type="UniProtKB" id="P22083"/>
    </source>
</evidence>
<evidence type="ECO:0000250" key="3">
    <source>
        <dbReference type="UniProtKB" id="Q11127"/>
    </source>
</evidence>
<evidence type="ECO:0000255" key="4"/>
<evidence type="ECO:0000256" key="5">
    <source>
        <dbReference type="SAM" id="MobiDB-lite"/>
    </source>
</evidence>
<evidence type="ECO:0000305" key="6"/>
<accession>Q659K9</accession>
<reference key="1">
    <citation type="journal article" date="2005" name="Nature">
        <title>Initial sequence of the chimpanzee genome and comparison with the human genome.</title>
        <authorList>
            <consortium name="Chimpanzee sequencing and analysis consortium"/>
        </authorList>
    </citation>
    <scope>NUCLEOTIDE SEQUENCE [LARGE SCALE GENOMIC DNA]</scope>
</reference>
<reference key="2">
    <citation type="submission" date="2004-09" db="EMBL/GenBank/DDBJ databases">
        <title>Phylogeny of fucosyltransferases.</title>
        <authorList>
            <person name="Martinez-Duncker I."/>
            <person name="Oriol R."/>
            <person name="Mollicone R."/>
        </authorList>
    </citation>
    <scope>NUCLEOTIDE SEQUENCE [MRNA] OF 126-530</scope>
</reference>